<protein>
    <recommendedName>
        <fullName evidence="1">DNA-directed RNA polymerase subunit beta</fullName>
        <shortName evidence="1">RNAP subunit beta</shortName>
        <ecNumber evidence="1">2.7.7.6</ecNumber>
    </recommendedName>
    <alternativeName>
        <fullName evidence="1">RNA polymerase subunit beta</fullName>
    </alternativeName>
    <alternativeName>
        <fullName evidence="1">Transcriptase subunit beta</fullName>
    </alternativeName>
</protein>
<dbReference type="EC" id="2.7.7.6" evidence="1"/>
<dbReference type="EMBL" id="CP000570">
    <property type="protein sequence ID" value="ABN82515.1"/>
    <property type="molecule type" value="Genomic_DNA"/>
</dbReference>
<dbReference type="RefSeq" id="WP_004198365.1">
    <property type="nucleotide sequence ID" value="NC_009074.1"/>
</dbReference>
<dbReference type="SMR" id="A3NEI7"/>
<dbReference type="GeneID" id="92980328"/>
<dbReference type="KEGG" id="bpd:BURPS668_3754"/>
<dbReference type="HOGENOM" id="CLU_000524_4_3_4"/>
<dbReference type="GO" id="GO:0000428">
    <property type="term" value="C:DNA-directed RNA polymerase complex"/>
    <property type="evidence" value="ECO:0007669"/>
    <property type="project" value="UniProtKB-KW"/>
</dbReference>
<dbReference type="GO" id="GO:0003677">
    <property type="term" value="F:DNA binding"/>
    <property type="evidence" value="ECO:0007669"/>
    <property type="project" value="UniProtKB-UniRule"/>
</dbReference>
<dbReference type="GO" id="GO:0003899">
    <property type="term" value="F:DNA-directed RNA polymerase activity"/>
    <property type="evidence" value="ECO:0007669"/>
    <property type="project" value="UniProtKB-UniRule"/>
</dbReference>
<dbReference type="GO" id="GO:0032549">
    <property type="term" value="F:ribonucleoside binding"/>
    <property type="evidence" value="ECO:0007669"/>
    <property type="project" value="InterPro"/>
</dbReference>
<dbReference type="GO" id="GO:0006351">
    <property type="term" value="P:DNA-templated transcription"/>
    <property type="evidence" value="ECO:0007669"/>
    <property type="project" value="UniProtKB-UniRule"/>
</dbReference>
<dbReference type="CDD" id="cd00653">
    <property type="entry name" value="RNA_pol_B_RPB2"/>
    <property type="match status" value="1"/>
</dbReference>
<dbReference type="FunFam" id="2.40.50.100:FF:000006">
    <property type="entry name" value="DNA-directed RNA polymerase subunit beta"/>
    <property type="match status" value="1"/>
</dbReference>
<dbReference type="FunFam" id="2.40.50.150:FF:000001">
    <property type="entry name" value="DNA-directed RNA polymerase subunit beta"/>
    <property type="match status" value="1"/>
</dbReference>
<dbReference type="FunFam" id="3.90.1110.10:FF:000004">
    <property type="entry name" value="DNA-directed RNA polymerase subunit beta"/>
    <property type="match status" value="1"/>
</dbReference>
<dbReference type="FunFam" id="3.90.1800.10:FF:000001">
    <property type="entry name" value="DNA-directed RNA polymerase subunit beta"/>
    <property type="match status" value="1"/>
</dbReference>
<dbReference type="Gene3D" id="2.40.50.100">
    <property type="match status" value="1"/>
</dbReference>
<dbReference type="Gene3D" id="2.40.50.150">
    <property type="match status" value="1"/>
</dbReference>
<dbReference type="Gene3D" id="3.90.1100.10">
    <property type="match status" value="2"/>
</dbReference>
<dbReference type="Gene3D" id="2.30.150.10">
    <property type="entry name" value="DNA-directed RNA polymerase, beta subunit, external 1 domain"/>
    <property type="match status" value="1"/>
</dbReference>
<dbReference type="Gene3D" id="2.40.270.10">
    <property type="entry name" value="DNA-directed RNA polymerase, subunit 2, domain 6"/>
    <property type="match status" value="2"/>
</dbReference>
<dbReference type="Gene3D" id="3.90.1800.10">
    <property type="entry name" value="RNA polymerase alpha subunit dimerisation domain"/>
    <property type="match status" value="1"/>
</dbReference>
<dbReference type="Gene3D" id="3.90.1110.10">
    <property type="entry name" value="RNA polymerase Rpb2, domain 2"/>
    <property type="match status" value="2"/>
</dbReference>
<dbReference type="HAMAP" id="MF_01321">
    <property type="entry name" value="RNApol_bact_RpoB"/>
    <property type="match status" value="1"/>
</dbReference>
<dbReference type="InterPro" id="IPR042107">
    <property type="entry name" value="DNA-dir_RNA_pol_bsu_ext_1_sf"/>
</dbReference>
<dbReference type="InterPro" id="IPR019462">
    <property type="entry name" value="DNA-dir_RNA_pol_bsu_external_1"/>
</dbReference>
<dbReference type="InterPro" id="IPR015712">
    <property type="entry name" value="DNA-dir_RNA_pol_su2"/>
</dbReference>
<dbReference type="InterPro" id="IPR007120">
    <property type="entry name" value="DNA-dir_RNAP_su2_dom"/>
</dbReference>
<dbReference type="InterPro" id="IPR037033">
    <property type="entry name" value="DNA-dir_RNAP_su2_hyb_sf"/>
</dbReference>
<dbReference type="InterPro" id="IPR010243">
    <property type="entry name" value="RNA_pol_bsu_bac"/>
</dbReference>
<dbReference type="InterPro" id="IPR007121">
    <property type="entry name" value="RNA_pol_bsu_CS"/>
</dbReference>
<dbReference type="InterPro" id="IPR007644">
    <property type="entry name" value="RNA_pol_bsu_protrusion"/>
</dbReference>
<dbReference type="InterPro" id="IPR007642">
    <property type="entry name" value="RNA_pol_Rpb2_2"/>
</dbReference>
<dbReference type="InterPro" id="IPR037034">
    <property type="entry name" value="RNA_pol_Rpb2_2_sf"/>
</dbReference>
<dbReference type="InterPro" id="IPR007645">
    <property type="entry name" value="RNA_pol_Rpb2_3"/>
</dbReference>
<dbReference type="InterPro" id="IPR007641">
    <property type="entry name" value="RNA_pol_Rpb2_7"/>
</dbReference>
<dbReference type="InterPro" id="IPR014724">
    <property type="entry name" value="RNA_pol_RPB2_OB-fold"/>
</dbReference>
<dbReference type="NCBIfam" id="NF001616">
    <property type="entry name" value="PRK00405.1"/>
    <property type="match status" value="1"/>
</dbReference>
<dbReference type="NCBIfam" id="TIGR02013">
    <property type="entry name" value="rpoB"/>
    <property type="match status" value="1"/>
</dbReference>
<dbReference type="PANTHER" id="PTHR20856">
    <property type="entry name" value="DNA-DIRECTED RNA POLYMERASE I SUBUNIT 2"/>
    <property type="match status" value="1"/>
</dbReference>
<dbReference type="Pfam" id="PF04563">
    <property type="entry name" value="RNA_pol_Rpb2_1"/>
    <property type="match status" value="1"/>
</dbReference>
<dbReference type="Pfam" id="PF04561">
    <property type="entry name" value="RNA_pol_Rpb2_2"/>
    <property type="match status" value="2"/>
</dbReference>
<dbReference type="Pfam" id="PF04565">
    <property type="entry name" value="RNA_pol_Rpb2_3"/>
    <property type="match status" value="1"/>
</dbReference>
<dbReference type="Pfam" id="PF10385">
    <property type="entry name" value="RNA_pol_Rpb2_45"/>
    <property type="match status" value="1"/>
</dbReference>
<dbReference type="Pfam" id="PF00562">
    <property type="entry name" value="RNA_pol_Rpb2_6"/>
    <property type="match status" value="1"/>
</dbReference>
<dbReference type="Pfam" id="PF04560">
    <property type="entry name" value="RNA_pol_Rpb2_7"/>
    <property type="match status" value="1"/>
</dbReference>
<dbReference type="SUPFAM" id="SSF64484">
    <property type="entry name" value="beta and beta-prime subunits of DNA dependent RNA-polymerase"/>
    <property type="match status" value="1"/>
</dbReference>
<dbReference type="PROSITE" id="PS01166">
    <property type="entry name" value="RNA_POL_BETA"/>
    <property type="match status" value="1"/>
</dbReference>
<comment type="function">
    <text evidence="1">DNA-dependent RNA polymerase catalyzes the transcription of DNA into RNA using the four ribonucleoside triphosphates as substrates.</text>
</comment>
<comment type="catalytic activity">
    <reaction evidence="1">
        <text>RNA(n) + a ribonucleoside 5'-triphosphate = RNA(n+1) + diphosphate</text>
        <dbReference type="Rhea" id="RHEA:21248"/>
        <dbReference type="Rhea" id="RHEA-COMP:14527"/>
        <dbReference type="Rhea" id="RHEA-COMP:17342"/>
        <dbReference type="ChEBI" id="CHEBI:33019"/>
        <dbReference type="ChEBI" id="CHEBI:61557"/>
        <dbReference type="ChEBI" id="CHEBI:140395"/>
        <dbReference type="EC" id="2.7.7.6"/>
    </reaction>
</comment>
<comment type="subunit">
    <text evidence="1">The RNAP catalytic core consists of 2 alpha, 1 beta, 1 beta' and 1 omega subunit. When a sigma factor is associated with the core the holoenzyme is formed, which can initiate transcription.</text>
</comment>
<comment type="similarity">
    <text evidence="1">Belongs to the RNA polymerase beta chain family.</text>
</comment>
<name>RPOB_BURP6</name>
<reference key="1">
    <citation type="journal article" date="2010" name="Genome Biol. Evol.">
        <title>Continuing evolution of Burkholderia mallei through genome reduction and large-scale rearrangements.</title>
        <authorList>
            <person name="Losada L."/>
            <person name="Ronning C.M."/>
            <person name="DeShazer D."/>
            <person name="Woods D."/>
            <person name="Fedorova N."/>
            <person name="Kim H.S."/>
            <person name="Shabalina S.A."/>
            <person name="Pearson T.R."/>
            <person name="Brinkac L."/>
            <person name="Tan P."/>
            <person name="Nandi T."/>
            <person name="Crabtree J."/>
            <person name="Badger J."/>
            <person name="Beckstrom-Sternberg S."/>
            <person name="Saqib M."/>
            <person name="Schutzer S.E."/>
            <person name="Keim P."/>
            <person name="Nierman W.C."/>
        </authorList>
    </citation>
    <scope>NUCLEOTIDE SEQUENCE [LARGE SCALE GENOMIC DNA]</scope>
    <source>
        <strain>668</strain>
    </source>
</reference>
<proteinExistence type="inferred from homology"/>
<organism>
    <name type="scientific">Burkholderia pseudomallei (strain 668)</name>
    <dbReference type="NCBI Taxonomy" id="320373"/>
    <lineage>
        <taxon>Bacteria</taxon>
        <taxon>Pseudomonadati</taxon>
        <taxon>Pseudomonadota</taxon>
        <taxon>Betaproteobacteria</taxon>
        <taxon>Burkholderiales</taxon>
        <taxon>Burkholderiaceae</taxon>
        <taxon>Burkholderia</taxon>
        <taxon>pseudomallei group</taxon>
    </lineage>
</organism>
<accession>A3NEI7</accession>
<sequence length="1368" mass="153151">MQYSFTEKKRIRKSFAKRSIVHQVPFLLATQLESFSTFLQADVPTAQRKSEGLQAAFTSVFPIVSHNGFARLEFVSYALSSPAFNIKECQQRGLTYCSALRAKVRLVLLDKESPSKPVVKEVKEQEVYMGEIPLMTPTGSFVINGTERVIVSQLHRSPGVFFEHDKGKTHSSGKLLFSARIIPYRGSWLDFEFDPKDVLYFRVDRRRKMPVTILLKAIGLTPEQILANFFVFDNFTLMDEGAQMEFVPERLRGEVARFDITDREGKVIVQKDKRINAKHIRDLEAAKTKYISVPEDYLLGRVLAKNVVDGDTGEVIANANDEITEGVLEKLREAKIKEIQTLYTNDLDQGPYISSTLRVDETVDKTAARIAIYRMMRPGEPPTEEAVEALFNRLFYSEDAYDLSKVGRMKFNRRVGRDEITGPMTLQDDDILATIKILVELRNGKGEVDDIDHLGNRRVRCVGELAENQFRAGLVRVERAVKERLGQAESENLMPHDLINSKPISSAIREFFGSSQLSQFMDQTNPLSEITHKRRVSALGPGGLTRERAGFEVRDVHPTHYGRVCPIETPEGPNIGLINSLALYAHLNEYGFLETPYRKVVDSKVTDQIDYLSAIEEGRYMIAQANAAIGDDGALVDELVSSREAGETMMVTPDRIQYMDVAPSQIVSVAASLIPFLEHDDANRALMGSNMQRQAVPCLRPEKPVVGTGIERTVAVDSGTTVQALRGGVVDYVDAGRIVIRVNDDEAVAGEVGVDIYNLIKYTRSNQNTNINQRPIVKMGDKVSRGDVLADGASTDLGELALGQNMLIAFMPWNGYNFEDSILISERVVADDRYTSIHIEELNVVARDTKLGPEEITRDISNLAEVQLGRLDESGIVYIGAEVEAGDVLVGKVTPKGETQLTPEEKLLRAIFGEKASDVKDTSLRVPSGMSGTVIDVQVFTREGIQRDKRAQQIIDDELKRYRLDLNDQLRIVEGDAFQRLARMLVGKVANGGPKKLAKGTKIDQAYLEDLDHYHWFDIRLADDEAAVQLEAIKNSIEEKRHQFDLAFEEKRKKLTQGDELPPGVLKMVKVYLAVKRRLQPGDKMAGRHGNKGVVSKIVPVEDMPYMADGRPADVVLNPLGVPSRMNVGQVLEVHLGWAAKGLGWRIGEMLARQTKIEELRVFLTKIYNESGRAEDLESFSDDEILELAKNLREGVPFATPVFDGATEEEMSKMLDLAFPDDIAEQLDMNPSKNQVRLYDGRTGEPFERRVTVGYMHYLKLHHLVDDKMHARSTGPYSLVTQQPLGGKAQFGGQRFGEMEVWALEAYGASYVLQEMLTVKSDDVTGRTKVYENLVKGDHVIDAGMPESFNVLVKEIRSLGIDIDLDRN</sequence>
<gene>
    <name evidence="1" type="primary">rpoB</name>
    <name type="ordered locus">BURPS668_3754</name>
</gene>
<feature type="chain" id="PRO_1000051965" description="DNA-directed RNA polymerase subunit beta">
    <location>
        <begin position="1"/>
        <end position="1368"/>
    </location>
</feature>
<keyword id="KW-0240">DNA-directed RNA polymerase</keyword>
<keyword id="KW-0548">Nucleotidyltransferase</keyword>
<keyword id="KW-0804">Transcription</keyword>
<keyword id="KW-0808">Transferase</keyword>
<evidence type="ECO:0000255" key="1">
    <source>
        <dbReference type="HAMAP-Rule" id="MF_01321"/>
    </source>
</evidence>